<gene>
    <name type="primary">yrvJ</name>
    <name type="ordered locus">BSU27580</name>
</gene>
<organism>
    <name type="scientific">Bacillus subtilis (strain 168)</name>
    <dbReference type="NCBI Taxonomy" id="224308"/>
    <lineage>
        <taxon>Bacteria</taxon>
        <taxon>Bacillati</taxon>
        <taxon>Bacillota</taxon>
        <taxon>Bacilli</taxon>
        <taxon>Bacillales</taxon>
        <taxon>Bacillaceae</taxon>
        <taxon>Bacillus</taxon>
    </lineage>
</organism>
<sequence>MNKKYFVLIVCIIFTSALFPTFSSVTAAQGEAVIATDEMNVRSGPGLSYGITAEVKKGERYPILKEDGDWVQIQLGSGEKGWVVSWLITKEDQASTSSSGSSDTVTSTDPDLRMRSGPGTSYEVIGKFPQGSQASVIDKDSGWIKISYHSATGWVSSEYVTSGGSSSASDESDQTEDSGASTTGTVGVSSLNVRASASHDAAIITKLDRGTKLTVLNEKNGWAHIEVNGLKGWVASHYLLTSSVPADDSANAGSSSSAKKAYIMYGGTNLRSDASTSASIVERAAKGDSYTITGSKGSWYEIKLDNGQTAYVANWVVQTSKSAEEAGEPPVSDSPSGNGSLNNKTIIVDPGHGGKDSGTIGYSGKFEKNLTIKTAKLLASKLRSAGADVYVTRQDDTFVSLQSRVSTSHYRNADAFISIHYDSYADTSTRGSTAYYYSPAKDQELASDVHSEVVKRSSIPDRGVLFGDYYVLRENRQPAMLYELGYVSHPQEEAIVHSNSYQEKVTDGIESGLEKYFQ</sequence>
<keyword id="KW-0134">Cell wall</keyword>
<keyword id="KW-0961">Cell wall biogenesis/degradation</keyword>
<keyword id="KW-0378">Hydrolase</keyword>
<keyword id="KW-0479">Metal-binding</keyword>
<keyword id="KW-1185">Reference proteome</keyword>
<keyword id="KW-0964">Secreted</keyword>
<keyword id="KW-0732">Signal</keyword>
<keyword id="KW-0862">Zinc</keyword>
<comment type="function">
    <text evidence="1">Probably involved in cell-wall metabolism.</text>
</comment>
<comment type="catalytic activity">
    <reaction>
        <text>Hydrolyzes the link between N-acetylmuramoyl residues and L-amino acid residues in certain cell-wall glycopeptides.</text>
        <dbReference type="EC" id="3.5.1.28"/>
    </reaction>
</comment>
<comment type="subcellular location">
    <subcellularLocation>
        <location evidence="1">Secreted</location>
        <location evidence="1">Cell wall</location>
    </subcellularLocation>
</comment>
<comment type="similarity">
    <text evidence="5">Belongs to the N-acetylmuramoyl-L-alanine amidase 3 family.</text>
</comment>
<evidence type="ECO:0000250" key="1"/>
<evidence type="ECO:0000255" key="2"/>
<evidence type="ECO:0000255" key="3">
    <source>
        <dbReference type="PROSITE-ProRule" id="PRU01117"/>
    </source>
</evidence>
<evidence type="ECO:0000256" key="4">
    <source>
        <dbReference type="SAM" id="MobiDB-lite"/>
    </source>
</evidence>
<evidence type="ECO:0000305" key="5"/>
<accession>O32041</accession>
<name>YRVJ_BACSU</name>
<protein>
    <recommendedName>
        <fullName>Putative N-acetylmuramoyl-L-alanine amidase YrvJ</fullName>
        <ecNumber>3.5.1.28</ecNumber>
    </recommendedName>
</protein>
<dbReference type="EC" id="3.5.1.28"/>
<dbReference type="EMBL" id="AL009126">
    <property type="protein sequence ID" value="CAB14717.1"/>
    <property type="molecule type" value="Genomic_DNA"/>
</dbReference>
<dbReference type="PIR" id="B69981">
    <property type="entry name" value="B69981"/>
</dbReference>
<dbReference type="RefSeq" id="NP_390636.1">
    <property type="nucleotide sequence ID" value="NC_000964.3"/>
</dbReference>
<dbReference type="RefSeq" id="WP_004399040.1">
    <property type="nucleotide sequence ID" value="NZ_OZ025638.1"/>
</dbReference>
<dbReference type="SMR" id="O32041"/>
<dbReference type="FunCoup" id="O32041">
    <property type="interactions" value="21"/>
</dbReference>
<dbReference type="STRING" id="224308.BSU27580"/>
<dbReference type="PaxDb" id="224308-BSU27580"/>
<dbReference type="DNASU" id="937544"/>
<dbReference type="EnsemblBacteria" id="CAB14717">
    <property type="protein sequence ID" value="CAB14717"/>
    <property type="gene ID" value="BSU_27580"/>
</dbReference>
<dbReference type="GeneID" id="937544"/>
<dbReference type="KEGG" id="bsu:BSU27580"/>
<dbReference type="PATRIC" id="fig|224308.179.peg.2997"/>
<dbReference type="eggNOG" id="COG0860">
    <property type="taxonomic scope" value="Bacteria"/>
</dbReference>
<dbReference type="eggNOG" id="COG3103">
    <property type="taxonomic scope" value="Bacteria"/>
</dbReference>
<dbReference type="eggNOG" id="COG4991">
    <property type="taxonomic scope" value="Bacteria"/>
</dbReference>
<dbReference type="InParanoid" id="O32041"/>
<dbReference type="OrthoDB" id="9806267at2"/>
<dbReference type="PhylomeDB" id="O32041"/>
<dbReference type="BioCyc" id="BSUB:BSU27580-MONOMER"/>
<dbReference type="Proteomes" id="UP000001570">
    <property type="component" value="Chromosome"/>
</dbReference>
<dbReference type="GO" id="GO:0005576">
    <property type="term" value="C:extracellular region"/>
    <property type="evidence" value="ECO:0007669"/>
    <property type="project" value="UniProtKB-KW"/>
</dbReference>
<dbReference type="GO" id="GO:0046872">
    <property type="term" value="F:metal ion binding"/>
    <property type="evidence" value="ECO:0007669"/>
    <property type="project" value="UniProtKB-KW"/>
</dbReference>
<dbReference type="GO" id="GO:0008745">
    <property type="term" value="F:N-acetylmuramoyl-L-alanine amidase activity"/>
    <property type="evidence" value="ECO:0007669"/>
    <property type="project" value="UniProtKB-EC"/>
</dbReference>
<dbReference type="GO" id="GO:0071555">
    <property type="term" value="P:cell wall organization"/>
    <property type="evidence" value="ECO:0007669"/>
    <property type="project" value="UniProtKB-KW"/>
</dbReference>
<dbReference type="GO" id="GO:0009253">
    <property type="term" value="P:peptidoglycan catabolic process"/>
    <property type="evidence" value="ECO:0007669"/>
    <property type="project" value="InterPro"/>
</dbReference>
<dbReference type="CDD" id="cd02696">
    <property type="entry name" value="MurNAc-LAA"/>
    <property type="match status" value="1"/>
</dbReference>
<dbReference type="Gene3D" id="2.30.30.40">
    <property type="entry name" value="SH3 Domains"/>
    <property type="match status" value="4"/>
</dbReference>
<dbReference type="Gene3D" id="3.40.630.40">
    <property type="entry name" value="Zn-dependent exopeptidases"/>
    <property type="match status" value="1"/>
</dbReference>
<dbReference type="InterPro" id="IPR051922">
    <property type="entry name" value="Bact_Sporulation_Assoc"/>
</dbReference>
<dbReference type="InterPro" id="IPR002508">
    <property type="entry name" value="MurNAc-LAA_cat"/>
</dbReference>
<dbReference type="InterPro" id="IPR017293">
    <property type="entry name" value="N-acetylmuramoyl-L-ala_amidase"/>
</dbReference>
<dbReference type="InterPro" id="IPR003646">
    <property type="entry name" value="SH3-like_bac-type"/>
</dbReference>
<dbReference type="PANTHER" id="PTHR30032:SF1">
    <property type="entry name" value="N-ACETYLMURAMOYL-L-ALANINE AMIDASE LYTC"/>
    <property type="match status" value="1"/>
</dbReference>
<dbReference type="PANTHER" id="PTHR30032">
    <property type="entry name" value="N-ACETYLMURAMOYL-L-ALANINE AMIDASE-RELATED"/>
    <property type="match status" value="1"/>
</dbReference>
<dbReference type="Pfam" id="PF01520">
    <property type="entry name" value="Amidase_3"/>
    <property type="match status" value="1"/>
</dbReference>
<dbReference type="Pfam" id="PF08239">
    <property type="entry name" value="SH3_3"/>
    <property type="match status" value="4"/>
</dbReference>
<dbReference type="PIRSF" id="PIRSF037846">
    <property type="entry name" value="Autolysin_YrvJ_prd"/>
    <property type="match status" value="1"/>
</dbReference>
<dbReference type="SMART" id="SM00646">
    <property type="entry name" value="Ami_3"/>
    <property type="match status" value="1"/>
</dbReference>
<dbReference type="SMART" id="SM00287">
    <property type="entry name" value="SH3b"/>
    <property type="match status" value="4"/>
</dbReference>
<dbReference type="SUPFAM" id="SSF53187">
    <property type="entry name" value="Zn-dependent exopeptidases"/>
    <property type="match status" value="1"/>
</dbReference>
<dbReference type="PROSITE" id="PS51781">
    <property type="entry name" value="SH3B"/>
    <property type="match status" value="4"/>
</dbReference>
<reference key="1">
    <citation type="journal article" date="1997" name="Nature">
        <title>The complete genome sequence of the Gram-positive bacterium Bacillus subtilis.</title>
        <authorList>
            <person name="Kunst F."/>
            <person name="Ogasawara N."/>
            <person name="Moszer I."/>
            <person name="Albertini A.M."/>
            <person name="Alloni G."/>
            <person name="Azevedo V."/>
            <person name="Bertero M.G."/>
            <person name="Bessieres P."/>
            <person name="Bolotin A."/>
            <person name="Borchert S."/>
            <person name="Borriss R."/>
            <person name="Boursier L."/>
            <person name="Brans A."/>
            <person name="Braun M."/>
            <person name="Brignell S.C."/>
            <person name="Bron S."/>
            <person name="Brouillet S."/>
            <person name="Bruschi C.V."/>
            <person name="Caldwell B."/>
            <person name="Capuano V."/>
            <person name="Carter N.M."/>
            <person name="Choi S.-K."/>
            <person name="Codani J.-J."/>
            <person name="Connerton I.F."/>
            <person name="Cummings N.J."/>
            <person name="Daniel R.A."/>
            <person name="Denizot F."/>
            <person name="Devine K.M."/>
            <person name="Duesterhoeft A."/>
            <person name="Ehrlich S.D."/>
            <person name="Emmerson P.T."/>
            <person name="Entian K.-D."/>
            <person name="Errington J."/>
            <person name="Fabret C."/>
            <person name="Ferrari E."/>
            <person name="Foulger D."/>
            <person name="Fritz C."/>
            <person name="Fujita M."/>
            <person name="Fujita Y."/>
            <person name="Fuma S."/>
            <person name="Galizzi A."/>
            <person name="Galleron N."/>
            <person name="Ghim S.-Y."/>
            <person name="Glaser P."/>
            <person name="Goffeau A."/>
            <person name="Golightly E.J."/>
            <person name="Grandi G."/>
            <person name="Guiseppi G."/>
            <person name="Guy B.J."/>
            <person name="Haga K."/>
            <person name="Haiech J."/>
            <person name="Harwood C.R."/>
            <person name="Henaut A."/>
            <person name="Hilbert H."/>
            <person name="Holsappel S."/>
            <person name="Hosono S."/>
            <person name="Hullo M.-F."/>
            <person name="Itaya M."/>
            <person name="Jones L.-M."/>
            <person name="Joris B."/>
            <person name="Karamata D."/>
            <person name="Kasahara Y."/>
            <person name="Klaerr-Blanchard M."/>
            <person name="Klein C."/>
            <person name="Kobayashi Y."/>
            <person name="Koetter P."/>
            <person name="Koningstein G."/>
            <person name="Krogh S."/>
            <person name="Kumano M."/>
            <person name="Kurita K."/>
            <person name="Lapidus A."/>
            <person name="Lardinois S."/>
            <person name="Lauber J."/>
            <person name="Lazarevic V."/>
            <person name="Lee S.-M."/>
            <person name="Levine A."/>
            <person name="Liu H."/>
            <person name="Masuda S."/>
            <person name="Mauel C."/>
            <person name="Medigue C."/>
            <person name="Medina N."/>
            <person name="Mellado R.P."/>
            <person name="Mizuno M."/>
            <person name="Moestl D."/>
            <person name="Nakai S."/>
            <person name="Noback M."/>
            <person name="Noone D."/>
            <person name="O'Reilly M."/>
            <person name="Ogawa K."/>
            <person name="Ogiwara A."/>
            <person name="Oudega B."/>
            <person name="Park S.-H."/>
            <person name="Parro V."/>
            <person name="Pohl T.M."/>
            <person name="Portetelle D."/>
            <person name="Porwollik S."/>
            <person name="Prescott A.M."/>
            <person name="Presecan E."/>
            <person name="Pujic P."/>
            <person name="Purnelle B."/>
            <person name="Rapoport G."/>
            <person name="Rey M."/>
            <person name="Reynolds S."/>
            <person name="Rieger M."/>
            <person name="Rivolta C."/>
            <person name="Rocha E."/>
            <person name="Roche B."/>
            <person name="Rose M."/>
            <person name="Sadaie Y."/>
            <person name="Sato T."/>
            <person name="Scanlan E."/>
            <person name="Schleich S."/>
            <person name="Schroeter R."/>
            <person name="Scoffone F."/>
            <person name="Sekiguchi J."/>
            <person name="Sekowska A."/>
            <person name="Seror S.J."/>
            <person name="Serror P."/>
            <person name="Shin B.-S."/>
            <person name="Soldo B."/>
            <person name="Sorokin A."/>
            <person name="Tacconi E."/>
            <person name="Takagi T."/>
            <person name="Takahashi H."/>
            <person name="Takemaru K."/>
            <person name="Takeuchi M."/>
            <person name="Tamakoshi A."/>
            <person name="Tanaka T."/>
            <person name="Terpstra P."/>
            <person name="Tognoni A."/>
            <person name="Tosato V."/>
            <person name="Uchiyama S."/>
            <person name="Vandenbol M."/>
            <person name="Vannier F."/>
            <person name="Vassarotti A."/>
            <person name="Viari A."/>
            <person name="Wambutt R."/>
            <person name="Wedler E."/>
            <person name="Wedler H."/>
            <person name="Weitzenegger T."/>
            <person name="Winters P."/>
            <person name="Wipat A."/>
            <person name="Yamamoto H."/>
            <person name="Yamane K."/>
            <person name="Yasumoto K."/>
            <person name="Yata K."/>
            <person name="Yoshida K."/>
            <person name="Yoshikawa H.-F."/>
            <person name="Zumstein E."/>
            <person name="Yoshikawa H."/>
            <person name="Danchin A."/>
        </authorList>
    </citation>
    <scope>NUCLEOTIDE SEQUENCE [LARGE SCALE GENOMIC DNA]</scope>
    <source>
        <strain>168</strain>
    </source>
</reference>
<proteinExistence type="inferred from homology"/>
<feature type="signal peptide" evidence="2">
    <location>
        <begin position="1"/>
        <end position="27"/>
    </location>
</feature>
<feature type="chain" id="PRO_0000360805" description="Putative N-acetylmuramoyl-L-alanine amidase YrvJ">
    <location>
        <begin position="28"/>
        <end position="518"/>
    </location>
</feature>
<feature type="domain" description="SH3b 1" evidence="3">
    <location>
        <begin position="29"/>
        <end position="91"/>
    </location>
</feature>
<feature type="domain" description="SH3b 2" evidence="3">
    <location>
        <begin position="102"/>
        <end position="164"/>
    </location>
</feature>
<feature type="domain" description="SH3b 3" evidence="3">
    <location>
        <begin position="181"/>
        <end position="243"/>
    </location>
</feature>
<feature type="domain" description="SH3b 4" evidence="3">
    <location>
        <begin position="258"/>
        <end position="320"/>
    </location>
</feature>
<feature type="domain" description="MurNAc-LAA" evidence="2">
    <location>
        <begin position="346"/>
        <end position="514"/>
    </location>
</feature>
<feature type="region of interest" description="Disordered" evidence="4">
    <location>
        <begin position="94"/>
        <end position="121"/>
    </location>
</feature>
<feature type="region of interest" description="Disordered" evidence="4">
    <location>
        <begin position="160"/>
        <end position="186"/>
    </location>
</feature>
<feature type="region of interest" description="Disordered" evidence="4">
    <location>
        <begin position="322"/>
        <end position="352"/>
    </location>
</feature>
<feature type="compositionally biased region" description="Low complexity" evidence="4">
    <location>
        <begin position="95"/>
        <end position="108"/>
    </location>
</feature>
<feature type="compositionally biased region" description="Low complexity" evidence="4">
    <location>
        <begin position="160"/>
        <end position="169"/>
    </location>
</feature>
<feature type="compositionally biased region" description="Polar residues" evidence="4">
    <location>
        <begin position="333"/>
        <end position="345"/>
    </location>
</feature>